<sequence length="144" mass="15174">MKLNDLSPAPGSRREKHRPGRGIGSGLGKTGGRGHKGQTSRSGGSIAPGFEGGQQPLHRRLPKFGFVSLKAMDRAEVRLSELAKVEGDLITVQSLKDANVIGQHVQRVKIMLSGEVTRAVTLKGIAVTKGARAAIEAAGGKFEE</sequence>
<proteinExistence type="inferred from homology"/>
<name>RL15_PSEE4</name>
<gene>
    <name evidence="1" type="primary">rplO</name>
    <name type="ordered locus">PSEEN0509</name>
</gene>
<protein>
    <recommendedName>
        <fullName evidence="1">Large ribosomal subunit protein uL15</fullName>
    </recommendedName>
    <alternativeName>
        <fullName evidence="3">50S ribosomal protein L15</fullName>
    </alternativeName>
</protein>
<dbReference type="EMBL" id="CT573326">
    <property type="protein sequence ID" value="CAK13455.1"/>
    <property type="molecule type" value="Genomic_DNA"/>
</dbReference>
<dbReference type="RefSeq" id="WP_011531896.1">
    <property type="nucleotide sequence ID" value="NC_008027.1"/>
</dbReference>
<dbReference type="SMR" id="Q1IFU7"/>
<dbReference type="STRING" id="384676.PSEEN0509"/>
<dbReference type="GeneID" id="93675541"/>
<dbReference type="KEGG" id="pen:PSEEN0509"/>
<dbReference type="eggNOG" id="COG0200">
    <property type="taxonomic scope" value="Bacteria"/>
</dbReference>
<dbReference type="HOGENOM" id="CLU_055188_4_2_6"/>
<dbReference type="OrthoDB" id="9810293at2"/>
<dbReference type="Proteomes" id="UP000000658">
    <property type="component" value="Chromosome"/>
</dbReference>
<dbReference type="GO" id="GO:0022625">
    <property type="term" value="C:cytosolic large ribosomal subunit"/>
    <property type="evidence" value="ECO:0007669"/>
    <property type="project" value="TreeGrafter"/>
</dbReference>
<dbReference type="GO" id="GO:0019843">
    <property type="term" value="F:rRNA binding"/>
    <property type="evidence" value="ECO:0007669"/>
    <property type="project" value="UniProtKB-UniRule"/>
</dbReference>
<dbReference type="GO" id="GO:0003735">
    <property type="term" value="F:structural constituent of ribosome"/>
    <property type="evidence" value="ECO:0007669"/>
    <property type="project" value="InterPro"/>
</dbReference>
<dbReference type="GO" id="GO:0006412">
    <property type="term" value="P:translation"/>
    <property type="evidence" value="ECO:0007669"/>
    <property type="project" value="UniProtKB-UniRule"/>
</dbReference>
<dbReference type="Gene3D" id="3.100.10.10">
    <property type="match status" value="1"/>
</dbReference>
<dbReference type="HAMAP" id="MF_01341">
    <property type="entry name" value="Ribosomal_uL15"/>
    <property type="match status" value="1"/>
</dbReference>
<dbReference type="InterPro" id="IPR030878">
    <property type="entry name" value="Ribosomal_uL15"/>
</dbReference>
<dbReference type="InterPro" id="IPR021131">
    <property type="entry name" value="Ribosomal_uL15/eL18"/>
</dbReference>
<dbReference type="InterPro" id="IPR036227">
    <property type="entry name" value="Ribosomal_uL15/eL18_sf"/>
</dbReference>
<dbReference type="InterPro" id="IPR005749">
    <property type="entry name" value="Ribosomal_uL15_bac-type"/>
</dbReference>
<dbReference type="InterPro" id="IPR001196">
    <property type="entry name" value="Ribosomal_uL15_CS"/>
</dbReference>
<dbReference type="NCBIfam" id="TIGR01071">
    <property type="entry name" value="rplO_bact"/>
    <property type="match status" value="1"/>
</dbReference>
<dbReference type="PANTHER" id="PTHR12934">
    <property type="entry name" value="50S RIBOSOMAL PROTEIN L15"/>
    <property type="match status" value="1"/>
</dbReference>
<dbReference type="PANTHER" id="PTHR12934:SF11">
    <property type="entry name" value="LARGE RIBOSOMAL SUBUNIT PROTEIN UL15M"/>
    <property type="match status" value="1"/>
</dbReference>
<dbReference type="Pfam" id="PF00828">
    <property type="entry name" value="Ribosomal_L27A"/>
    <property type="match status" value="1"/>
</dbReference>
<dbReference type="SUPFAM" id="SSF52080">
    <property type="entry name" value="Ribosomal proteins L15p and L18e"/>
    <property type="match status" value="1"/>
</dbReference>
<dbReference type="PROSITE" id="PS00475">
    <property type="entry name" value="RIBOSOMAL_L15"/>
    <property type="match status" value="1"/>
</dbReference>
<evidence type="ECO:0000255" key="1">
    <source>
        <dbReference type="HAMAP-Rule" id="MF_01341"/>
    </source>
</evidence>
<evidence type="ECO:0000256" key="2">
    <source>
        <dbReference type="SAM" id="MobiDB-lite"/>
    </source>
</evidence>
<evidence type="ECO:0000305" key="3"/>
<organism>
    <name type="scientific">Pseudomonas entomophila (strain L48)</name>
    <dbReference type="NCBI Taxonomy" id="384676"/>
    <lineage>
        <taxon>Bacteria</taxon>
        <taxon>Pseudomonadati</taxon>
        <taxon>Pseudomonadota</taxon>
        <taxon>Gammaproteobacteria</taxon>
        <taxon>Pseudomonadales</taxon>
        <taxon>Pseudomonadaceae</taxon>
        <taxon>Pseudomonas</taxon>
    </lineage>
</organism>
<feature type="chain" id="PRO_1000054519" description="Large ribosomal subunit protein uL15">
    <location>
        <begin position="1"/>
        <end position="144"/>
    </location>
</feature>
<feature type="region of interest" description="Disordered" evidence="2">
    <location>
        <begin position="1"/>
        <end position="57"/>
    </location>
</feature>
<feature type="compositionally biased region" description="Gly residues" evidence="2">
    <location>
        <begin position="21"/>
        <end position="31"/>
    </location>
</feature>
<keyword id="KW-0687">Ribonucleoprotein</keyword>
<keyword id="KW-0689">Ribosomal protein</keyword>
<keyword id="KW-0694">RNA-binding</keyword>
<keyword id="KW-0699">rRNA-binding</keyword>
<comment type="function">
    <text evidence="1">Binds to the 23S rRNA.</text>
</comment>
<comment type="subunit">
    <text evidence="1">Part of the 50S ribosomal subunit.</text>
</comment>
<comment type="similarity">
    <text evidence="1">Belongs to the universal ribosomal protein uL15 family.</text>
</comment>
<accession>Q1IFU7</accession>
<reference key="1">
    <citation type="journal article" date="2006" name="Nat. Biotechnol.">
        <title>Complete genome sequence of the entomopathogenic and metabolically versatile soil bacterium Pseudomonas entomophila.</title>
        <authorList>
            <person name="Vodovar N."/>
            <person name="Vallenet D."/>
            <person name="Cruveiller S."/>
            <person name="Rouy Z."/>
            <person name="Barbe V."/>
            <person name="Acosta C."/>
            <person name="Cattolico L."/>
            <person name="Jubin C."/>
            <person name="Lajus A."/>
            <person name="Segurens B."/>
            <person name="Vacherie B."/>
            <person name="Wincker P."/>
            <person name="Weissenbach J."/>
            <person name="Lemaitre B."/>
            <person name="Medigue C."/>
            <person name="Boccard F."/>
        </authorList>
    </citation>
    <scope>NUCLEOTIDE SEQUENCE [LARGE SCALE GENOMIC DNA]</scope>
    <source>
        <strain>L48</strain>
    </source>
</reference>